<comment type="function">
    <text evidence="1">Catalyzes the conversion of uracil and 5-phospho-alpha-D-ribose 1-diphosphate (PRPP) to UMP and diphosphate.</text>
</comment>
<comment type="catalytic activity">
    <reaction evidence="1">
        <text>UMP + diphosphate = 5-phospho-alpha-D-ribose 1-diphosphate + uracil</text>
        <dbReference type="Rhea" id="RHEA:13017"/>
        <dbReference type="ChEBI" id="CHEBI:17568"/>
        <dbReference type="ChEBI" id="CHEBI:33019"/>
        <dbReference type="ChEBI" id="CHEBI:57865"/>
        <dbReference type="ChEBI" id="CHEBI:58017"/>
        <dbReference type="EC" id="2.4.2.9"/>
    </reaction>
</comment>
<comment type="cofactor">
    <cofactor evidence="1">
        <name>Mg(2+)</name>
        <dbReference type="ChEBI" id="CHEBI:18420"/>
    </cofactor>
    <text evidence="1">Binds 1 Mg(2+) ion per subunit. The magnesium is bound as Mg-PRPP.</text>
</comment>
<comment type="activity regulation">
    <text evidence="1">Allosterically activated by GTP.</text>
</comment>
<comment type="pathway">
    <text evidence="1">Pyrimidine metabolism; UMP biosynthesis via salvage pathway; UMP from uracil: step 1/1.</text>
</comment>
<comment type="similarity">
    <text evidence="1">Belongs to the UPRTase family.</text>
</comment>
<sequence length="209" mass="23212">MDGVTVIDHPLVQHKLTIMRRKETSTGSFRRLLREISTLLCYEVTRDLELTMETIETPLQTMESPILEGKKLVFASILRAGNGLLEGMLDLVPSARVSHIGVYRDHETLQPVEYYFKAPEDVAERLIIVVDPMLATGNSSIAAIDKLKERGAHNIRFLCLLAAPEGIQNFRAAHPDVPVFTASIDSHLNEKGYIVPGLGDAGDRMYGTK</sequence>
<feature type="chain" id="PRO_1000139152" description="Uracil phosphoribosyltransferase">
    <location>
        <begin position="1"/>
        <end position="209"/>
    </location>
</feature>
<feature type="binding site" evidence="1">
    <location>
        <position position="79"/>
    </location>
    <ligand>
        <name>5-phospho-alpha-D-ribose 1-diphosphate</name>
        <dbReference type="ChEBI" id="CHEBI:58017"/>
    </ligand>
</feature>
<feature type="binding site" evidence="1">
    <location>
        <position position="104"/>
    </location>
    <ligand>
        <name>5-phospho-alpha-D-ribose 1-diphosphate</name>
        <dbReference type="ChEBI" id="CHEBI:58017"/>
    </ligand>
</feature>
<feature type="binding site" evidence="1">
    <location>
        <begin position="131"/>
        <end position="139"/>
    </location>
    <ligand>
        <name>5-phospho-alpha-D-ribose 1-diphosphate</name>
        <dbReference type="ChEBI" id="CHEBI:58017"/>
    </ligand>
</feature>
<feature type="binding site" evidence="1">
    <location>
        <position position="194"/>
    </location>
    <ligand>
        <name>uracil</name>
        <dbReference type="ChEBI" id="CHEBI:17568"/>
    </ligand>
</feature>
<feature type="binding site" evidence="1">
    <location>
        <begin position="199"/>
        <end position="201"/>
    </location>
    <ligand>
        <name>uracil</name>
        <dbReference type="ChEBI" id="CHEBI:17568"/>
    </ligand>
</feature>
<feature type="binding site" evidence="1">
    <location>
        <position position="200"/>
    </location>
    <ligand>
        <name>5-phospho-alpha-D-ribose 1-diphosphate</name>
        <dbReference type="ChEBI" id="CHEBI:58017"/>
    </ligand>
</feature>
<keyword id="KW-0021">Allosteric enzyme</keyword>
<keyword id="KW-0328">Glycosyltransferase</keyword>
<keyword id="KW-0342">GTP-binding</keyword>
<keyword id="KW-0460">Magnesium</keyword>
<keyword id="KW-0547">Nucleotide-binding</keyword>
<keyword id="KW-1185">Reference proteome</keyword>
<keyword id="KW-0808">Transferase</keyword>
<gene>
    <name evidence="1" type="primary">upp</name>
    <name type="ordered locus">Rleg2_4179</name>
</gene>
<name>UPP_RHILW</name>
<dbReference type="EC" id="2.4.2.9" evidence="1"/>
<dbReference type="EMBL" id="CP001191">
    <property type="protein sequence ID" value="ACI57441.1"/>
    <property type="molecule type" value="Genomic_DNA"/>
</dbReference>
<dbReference type="RefSeq" id="WP_012559569.1">
    <property type="nucleotide sequence ID" value="NC_011369.1"/>
</dbReference>
<dbReference type="SMR" id="B5ZXI2"/>
<dbReference type="STRING" id="395492.Rleg2_4179"/>
<dbReference type="KEGG" id="rlt:Rleg2_4179"/>
<dbReference type="eggNOG" id="COG0035">
    <property type="taxonomic scope" value="Bacteria"/>
</dbReference>
<dbReference type="HOGENOM" id="CLU_067096_2_2_5"/>
<dbReference type="UniPathway" id="UPA00574">
    <property type="reaction ID" value="UER00636"/>
</dbReference>
<dbReference type="Proteomes" id="UP000008330">
    <property type="component" value="Chromosome"/>
</dbReference>
<dbReference type="GO" id="GO:0005525">
    <property type="term" value="F:GTP binding"/>
    <property type="evidence" value="ECO:0007669"/>
    <property type="project" value="UniProtKB-KW"/>
</dbReference>
<dbReference type="GO" id="GO:0000287">
    <property type="term" value="F:magnesium ion binding"/>
    <property type="evidence" value="ECO:0007669"/>
    <property type="project" value="UniProtKB-UniRule"/>
</dbReference>
<dbReference type="GO" id="GO:0004845">
    <property type="term" value="F:uracil phosphoribosyltransferase activity"/>
    <property type="evidence" value="ECO:0007669"/>
    <property type="project" value="UniProtKB-UniRule"/>
</dbReference>
<dbReference type="GO" id="GO:0044206">
    <property type="term" value="P:UMP salvage"/>
    <property type="evidence" value="ECO:0007669"/>
    <property type="project" value="UniProtKB-UniRule"/>
</dbReference>
<dbReference type="GO" id="GO:0006223">
    <property type="term" value="P:uracil salvage"/>
    <property type="evidence" value="ECO:0007669"/>
    <property type="project" value="InterPro"/>
</dbReference>
<dbReference type="CDD" id="cd06223">
    <property type="entry name" value="PRTases_typeI"/>
    <property type="match status" value="1"/>
</dbReference>
<dbReference type="FunFam" id="3.40.50.2020:FF:000003">
    <property type="entry name" value="Uracil phosphoribosyltransferase"/>
    <property type="match status" value="1"/>
</dbReference>
<dbReference type="Gene3D" id="3.40.50.2020">
    <property type="match status" value="1"/>
</dbReference>
<dbReference type="HAMAP" id="MF_01218_B">
    <property type="entry name" value="Upp_B"/>
    <property type="match status" value="1"/>
</dbReference>
<dbReference type="InterPro" id="IPR000836">
    <property type="entry name" value="PRibTrfase_dom"/>
</dbReference>
<dbReference type="InterPro" id="IPR029057">
    <property type="entry name" value="PRTase-like"/>
</dbReference>
<dbReference type="InterPro" id="IPR034332">
    <property type="entry name" value="Upp_B"/>
</dbReference>
<dbReference type="InterPro" id="IPR050054">
    <property type="entry name" value="UPRTase/APRTase"/>
</dbReference>
<dbReference type="InterPro" id="IPR005765">
    <property type="entry name" value="Ura_phspho_trans"/>
</dbReference>
<dbReference type="NCBIfam" id="NF001097">
    <property type="entry name" value="PRK00129.1"/>
    <property type="match status" value="1"/>
</dbReference>
<dbReference type="NCBIfam" id="TIGR01091">
    <property type="entry name" value="upp"/>
    <property type="match status" value="1"/>
</dbReference>
<dbReference type="PANTHER" id="PTHR32315">
    <property type="entry name" value="ADENINE PHOSPHORIBOSYLTRANSFERASE"/>
    <property type="match status" value="1"/>
</dbReference>
<dbReference type="PANTHER" id="PTHR32315:SF4">
    <property type="entry name" value="URACIL PHOSPHORIBOSYLTRANSFERASE, CHLOROPLASTIC"/>
    <property type="match status" value="1"/>
</dbReference>
<dbReference type="Pfam" id="PF14681">
    <property type="entry name" value="UPRTase"/>
    <property type="match status" value="1"/>
</dbReference>
<dbReference type="SUPFAM" id="SSF53271">
    <property type="entry name" value="PRTase-like"/>
    <property type="match status" value="1"/>
</dbReference>
<evidence type="ECO:0000255" key="1">
    <source>
        <dbReference type="HAMAP-Rule" id="MF_01218"/>
    </source>
</evidence>
<reference key="1">
    <citation type="journal article" date="2010" name="Stand. Genomic Sci.">
        <title>Complete genome sequence of Rhizobium leguminosarum bv trifolii strain WSM2304, an effective microsymbiont of the South American clover Trifolium polymorphum.</title>
        <authorList>
            <person name="Reeve W."/>
            <person name="O'Hara G."/>
            <person name="Chain P."/>
            <person name="Ardley J."/>
            <person name="Brau L."/>
            <person name="Nandesena K."/>
            <person name="Tiwari R."/>
            <person name="Malfatti S."/>
            <person name="Kiss H."/>
            <person name="Lapidus A."/>
            <person name="Copeland A."/>
            <person name="Nolan M."/>
            <person name="Land M."/>
            <person name="Ivanova N."/>
            <person name="Mavromatis K."/>
            <person name="Markowitz V."/>
            <person name="Kyrpides N."/>
            <person name="Melino V."/>
            <person name="Denton M."/>
            <person name="Yates R."/>
            <person name="Howieson J."/>
        </authorList>
    </citation>
    <scope>NUCLEOTIDE SEQUENCE [LARGE SCALE GENOMIC DNA]</scope>
    <source>
        <strain>WSM2304</strain>
    </source>
</reference>
<organism>
    <name type="scientific">Rhizobium leguminosarum bv. trifolii (strain WSM2304)</name>
    <dbReference type="NCBI Taxonomy" id="395492"/>
    <lineage>
        <taxon>Bacteria</taxon>
        <taxon>Pseudomonadati</taxon>
        <taxon>Pseudomonadota</taxon>
        <taxon>Alphaproteobacteria</taxon>
        <taxon>Hyphomicrobiales</taxon>
        <taxon>Rhizobiaceae</taxon>
        <taxon>Rhizobium/Agrobacterium group</taxon>
        <taxon>Rhizobium</taxon>
    </lineage>
</organism>
<accession>B5ZXI2</accession>
<proteinExistence type="inferred from homology"/>
<protein>
    <recommendedName>
        <fullName evidence="1">Uracil phosphoribosyltransferase</fullName>
        <ecNumber evidence="1">2.4.2.9</ecNumber>
    </recommendedName>
    <alternativeName>
        <fullName evidence="1">UMP pyrophosphorylase</fullName>
    </alternativeName>
    <alternativeName>
        <fullName evidence="1">UPRTase</fullName>
    </alternativeName>
</protein>